<protein>
    <recommendedName>
        <fullName evidence="4">Granule associated Rac and RHOG effector protein 1</fullName>
        <shortName evidence="4">GARRE1</shortName>
    </recommendedName>
</protein>
<organism>
    <name type="scientific">Homo sapiens</name>
    <name type="common">Human</name>
    <dbReference type="NCBI Taxonomy" id="9606"/>
    <lineage>
        <taxon>Eukaryota</taxon>
        <taxon>Metazoa</taxon>
        <taxon>Chordata</taxon>
        <taxon>Craniata</taxon>
        <taxon>Vertebrata</taxon>
        <taxon>Euteleostomi</taxon>
        <taxon>Mammalia</taxon>
        <taxon>Eutheria</taxon>
        <taxon>Euarchontoglires</taxon>
        <taxon>Primates</taxon>
        <taxon>Haplorrhini</taxon>
        <taxon>Catarrhini</taxon>
        <taxon>Hominidae</taxon>
        <taxon>Homo</taxon>
    </lineage>
</organism>
<name>GRRE1_HUMAN</name>
<keyword id="KW-0002">3D-structure</keyword>
<keyword id="KW-0963">Cytoplasm</keyword>
<keyword id="KW-0597">Phosphoprotein</keyword>
<keyword id="KW-1267">Proteomics identification</keyword>
<keyword id="KW-1185">Reference proteome</keyword>
<reference key="1">
    <citation type="journal article" date="1997" name="DNA Res.">
        <title>Prediction of the coding sequences of unidentified human genes. VII. The complete sequences of 100 new cDNA clones from brain which can code for large proteins in vitro.</title>
        <authorList>
            <person name="Nagase T."/>
            <person name="Ishikawa K."/>
            <person name="Nakajima D."/>
            <person name="Ohira M."/>
            <person name="Seki N."/>
            <person name="Miyajima N."/>
            <person name="Tanaka A."/>
            <person name="Kotani H."/>
            <person name="Nomura N."/>
            <person name="Ohara O."/>
        </authorList>
    </citation>
    <scope>NUCLEOTIDE SEQUENCE [LARGE SCALE MRNA]</scope>
    <source>
        <tissue>Brain</tissue>
    </source>
</reference>
<reference key="2">
    <citation type="journal article" date="2004" name="Genome Res.">
        <title>The status, quality, and expansion of the NIH full-length cDNA project: the Mammalian Gene Collection (MGC).</title>
        <authorList>
            <consortium name="The MGC Project Team"/>
        </authorList>
    </citation>
    <scope>NUCLEOTIDE SEQUENCE [LARGE SCALE MRNA]</scope>
    <source>
        <tissue>Heart</tissue>
        <tissue>Lung</tissue>
    </source>
</reference>
<reference key="3">
    <citation type="journal article" date="2008" name="Proc. Natl. Acad. Sci. U.S.A.">
        <title>A quantitative atlas of mitotic phosphorylation.</title>
        <authorList>
            <person name="Dephoure N."/>
            <person name="Zhou C."/>
            <person name="Villen J."/>
            <person name="Beausoleil S.A."/>
            <person name="Bakalarski C.E."/>
            <person name="Elledge S.J."/>
            <person name="Gygi S.P."/>
        </authorList>
    </citation>
    <scope>IDENTIFICATION BY MASS SPECTROMETRY [LARGE SCALE ANALYSIS]</scope>
    <source>
        <tissue>Cervix carcinoma</tissue>
    </source>
</reference>
<reference key="4">
    <citation type="journal article" date="2013" name="J. Proteome Res.">
        <title>Toward a comprehensive characterization of a human cancer cell phosphoproteome.</title>
        <authorList>
            <person name="Zhou H."/>
            <person name="Di Palma S."/>
            <person name="Preisinger C."/>
            <person name="Peng M."/>
            <person name="Polat A.N."/>
            <person name="Heck A.J."/>
            <person name="Mohammed S."/>
        </authorList>
    </citation>
    <scope>PHOSPHORYLATION [LARGE SCALE ANALYSIS] AT SER-723</scope>
    <scope>IDENTIFICATION BY MASS SPECTROMETRY [LARGE SCALE ANALYSIS]</scope>
    <source>
        <tissue>Cervix carcinoma</tissue>
        <tissue>Erythroleukemia</tissue>
    </source>
</reference>
<reference key="5">
    <citation type="journal article" date="2018" name="Mol. Cell">
        <title>High-Density Proximity Mapping Reveals the Subcellular Organization of mRNA-Associated Granules and Bodies.</title>
        <authorList>
            <person name="Youn J.Y."/>
            <person name="Dunham W.H."/>
            <person name="Hong S.J."/>
            <person name="Knight J.D.R."/>
            <person name="Bashkurov M."/>
            <person name="Chen G.I."/>
            <person name="Bagci H."/>
            <person name="Rathod B."/>
            <person name="MacLeod G."/>
            <person name="Eng S.W.M."/>
            <person name="Angers S."/>
            <person name="Morris Q."/>
            <person name="Fabian M."/>
            <person name="Cote J.F."/>
            <person name="Gingras A.C."/>
        </authorList>
    </citation>
    <scope>INTERACTION WITH TNRC6A AND AGO2</scope>
    <scope>FUNCTION</scope>
    <scope>SUBCELLULAR LOCATION</scope>
</reference>
<reference key="6">
    <citation type="journal article" date="2020" name="Nat. Cell Biol.">
        <title>Mapping the proximity interaction network of the Rho-family GTPases reveals signalling pathways and regulatory mechanisms.</title>
        <authorList>
            <person name="Bagci H."/>
            <person name="Sriskandarajah N."/>
            <person name="Robert A."/>
            <person name="Boulais J."/>
            <person name="Elkholi I.E."/>
            <person name="Tran V."/>
            <person name="Lin Z.Y."/>
            <person name="Thibault M.P."/>
            <person name="Dube N."/>
            <person name="Faubert D."/>
            <person name="Hipfner D.R."/>
            <person name="Gingras A.C."/>
            <person name="Cote J.F."/>
        </authorList>
    </citation>
    <scope>FUNCTION</scope>
    <scope>INTERACTION WITH RAC1</scope>
</reference>
<reference key="7">
    <citation type="journal article" date="2020" name="Nat. Cell Biol.">
        <title>Author Correction: Mapping the proximity interaction network of the Rho-family GTPases reveals signalling pathways and regulatory mechanisms.</title>
        <authorList>
            <person name="Bagci H."/>
            <person name="Sriskandarajah N."/>
            <person name="Robert A."/>
            <person name="Boulais J."/>
            <person name="Elkholi I.E."/>
            <person name="Tran V."/>
            <person name="Lin Z.Y."/>
            <person name="Thibault M.P."/>
            <person name="Dube N."/>
            <person name="Faubert D."/>
            <person name="Hipfner D.R."/>
            <person name="Gingras A.C."/>
            <person name="Cote J.F."/>
        </authorList>
    </citation>
    <scope>CORRECTION OF PUBMED:31871319</scope>
</reference>
<feature type="chain" id="PRO_0000050748" description="Granule associated Rac and RHOG effector protein 1">
    <location>
        <begin position="1"/>
        <end position="1070"/>
    </location>
</feature>
<feature type="region of interest" description="Disordered" evidence="1">
    <location>
        <begin position="681"/>
        <end position="771"/>
    </location>
</feature>
<feature type="region of interest" description="Disordered" evidence="1">
    <location>
        <begin position="855"/>
        <end position="992"/>
    </location>
</feature>
<feature type="region of interest" description="Disordered" evidence="1">
    <location>
        <begin position="1032"/>
        <end position="1070"/>
    </location>
</feature>
<feature type="compositionally biased region" description="Pro residues" evidence="1">
    <location>
        <begin position="692"/>
        <end position="702"/>
    </location>
</feature>
<feature type="compositionally biased region" description="Low complexity" evidence="1">
    <location>
        <begin position="719"/>
        <end position="742"/>
    </location>
</feature>
<feature type="compositionally biased region" description="Low complexity" evidence="1">
    <location>
        <begin position="906"/>
        <end position="924"/>
    </location>
</feature>
<feature type="compositionally biased region" description="Low complexity" evidence="1">
    <location>
        <begin position="951"/>
        <end position="962"/>
    </location>
</feature>
<feature type="compositionally biased region" description="Pro residues" evidence="1">
    <location>
        <begin position="977"/>
        <end position="992"/>
    </location>
</feature>
<feature type="compositionally biased region" description="Low complexity" evidence="1">
    <location>
        <begin position="1046"/>
        <end position="1058"/>
    </location>
</feature>
<feature type="modified residue" description="Phosphoserine" evidence="7">
    <location>
        <position position="723"/>
    </location>
</feature>
<feature type="sequence conflict" description="In Ref. 1; BAA20812." evidence="4" ref="1">
    <original>A</original>
    <variation>V</variation>
    <location>
        <position position="127"/>
    </location>
</feature>
<feature type="helix" evidence="8">
    <location>
        <begin position="225"/>
        <end position="236"/>
    </location>
</feature>
<feature type="helix" evidence="8">
    <location>
        <begin position="238"/>
        <end position="241"/>
    </location>
</feature>
<feature type="helix" evidence="8">
    <location>
        <begin position="250"/>
        <end position="260"/>
    </location>
</feature>
<feature type="turn" evidence="8">
    <location>
        <begin position="261"/>
        <end position="263"/>
    </location>
</feature>
<feature type="helix" evidence="8">
    <location>
        <begin position="267"/>
        <end position="291"/>
    </location>
</feature>
<feature type="strand" evidence="8">
    <location>
        <begin position="296"/>
        <end position="299"/>
    </location>
</feature>
<feature type="helix" evidence="8">
    <location>
        <begin position="302"/>
        <end position="304"/>
    </location>
</feature>
<feature type="helix" evidence="8">
    <location>
        <begin position="306"/>
        <end position="312"/>
    </location>
</feature>
<feature type="turn" evidence="8">
    <location>
        <begin position="313"/>
        <end position="316"/>
    </location>
</feature>
<feature type="helix" evidence="8">
    <location>
        <begin position="319"/>
        <end position="325"/>
    </location>
</feature>
<feature type="turn" evidence="8">
    <location>
        <begin position="336"/>
        <end position="338"/>
    </location>
</feature>
<feature type="helix" evidence="8">
    <location>
        <begin position="339"/>
        <end position="341"/>
    </location>
</feature>
<feature type="strand" evidence="8">
    <location>
        <begin position="344"/>
        <end position="346"/>
    </location>
</feature>
<feature type="strand" evidence="8">
    <location>
        <begin position="349"/>
        <end position="351"/>
    </location>
</feature>
<feature type="helix" evidence="8">
    <location>
        <begin position="360"/>
        <end position="376"/>
    </location>
</feature>
<feature type="helix" evidence="8">
    <location>
        <begin position="392"/>
        <end position="397"/>
    </location>
</feature>
<feature type="helix" evidence="8">
    <location>
        <begin position="401"/>
        <end position="416"/>
    </location>
</feature>
<feature type="turn" evidence="8">
    <location>
        <begin position="419"/>
        <end position="421"/>
    </location>
</feature>
<feature type="strand" evidence="8">
    <location>
        <begin position="422"/>
        <end position="426"/>
    </location>
</feature>
<feature type="helix" evidence="8">
    <location>
        <begin position="432"/>
        <end position="435"/>
    </location>
</feature>
<feature type="strand" evidence="8">
    <location>
        <begin position="438"/>
        <end position="442"/>
    </location>
</feature>
<feature type="strand" evidence="8">
    <location>
        <begin position="445"/>
        <end position="458"/>
    </location>
</feature>
<feature type="helix" evidence="8">
    <location>
        <begin position="460"/>
        <end position="465"/>
    </location>
</feature>
<feature type="strand" evidence="8">
    <location>
        <begin position="476"/>
        <end position="488"/>
    </location>
</feature>
<feature type="helix" evidence="8">
    <location>
        <begin position="489"/>
        <end position="494"/>
    </location>
</feature>
<feature type="strand" evidence="8">
    <location>
        <begin position="502"/>
        <end position="507"/>
    </location>
</feature>
<feature type="helix" evidence="8">
    <location>
        <begin position="532"/>
        <end position="540"/>
    </location>
</feature>
<comment type="function">
    <text evidence="2 3">Acts as an effector of RAC1 (PubMed:31871319). Associates with CCR4-NOT complex which is one of the major cellular mRNA deadenylases and is linked to various cellular processes including bulk mRNA degradation, miRNA-mediated repression, translational repression during translational initiation and general transcription regulation (PubMed:29395067). May also play a role in miRNA silencing machinery (PubMed:29395067).</text>
</comment>
<comment type="subunit">
    <text evidence="2">Interacts with AGO2 and TNRC6A.</text>
</comment>
<comment type="interaction">
    <interactant intactId="EBI-8796785">
        <id>O15063</id>
    </interactant>
    <interactant intactId="EBI-6424030">
        <id>Q8N5S9</id>
        <label>CAMKK1</label>
    </interactant>
    <organismsDiffer>false</organismsDiffer>
    <experiments>4</experiments>
</comment>
<comment type="subcellular location">
    <subcellularLocation>
        <location evidence="5">Cytoplasm</location>
        <location evidence="5">P-body</location>
    </subcellularLocation>
</comment>
<comment type="sequence caution" evidence="4">
    <conflict type="erroneous initiation">
        <sequence resource="EMBL-CDS" id="BAA20812"/>
    </conflict>
    <text>Extended N-terminus.</text>
</comment>
<sequence>MYCCSAQDSKMDYKRRFLLGGSKQKVQQHQQYPMPELGRALSAPLASTATTAPLGSLTAAGSCHHAMPHTTPIADIQQGISKYLDALNVFCRASTFLTDLFSTVFRNSHYSKAATQLKDVQEHVMEAASRLTSAIKPEIAKMLMELSAGAANFTDQKEFSLQDIEVLGRCFLTVVQVHFQFLTHALQKVQPVAHSCFAEVIVPEKKNSGSGGGLSGMGHTPEVEEAVRSWRGAAEATSRLRERGCDGCLAGIEVQQLFCSQSAAIPEHQLKELNIKIDSALQAYKIALESLGHCEYAMKAGFHLNPKAIEASLQGCCSEAEAQQTGRRQTPPQPMQCELPTVPVQIGSHFLKGVSFNESAADNLKLKTHTMLQLMKEAGCYNGITSRDDFPVTEVLNQVCPSTWRGACKTAVQLLFGQAGLVVVDTAQIENKEAYAPQISLEGSRIVVQVPSTWCLKEDPATMSLLQRSLDPEKTLGLVDVLYTAVLDLNRWRAGREQALPCIQIQLQREICDFGNQADLPSGNGNKSSGGLQKTFSKLTSRFTKKASCTSSSSSTNYSIQNTPSKNIFIAGCSEEKAKMPGNIDTRLQSILNIGNFPRTTDPSQSAQNSSNTVANGFLMERRENFLHGDDGKDEKGMNLPTDQEMQEVIDFLSGFNMGQSHQGSPLVTRHNSAATAMVTEQKAGAMQPQQPSLPVPPPPRAPQAGAHTPLTPQPGLAPQQQSPKQQQPQVQYYQHLLQPIGPQQPPPQPRAPGKWVHGSSQQPAQAVGAGLSPLGQWPGISDLSSDLYSLGLVSSYMDNVMSEVLGQKPQGPRNNTWPNRDQSDGVFGMLGEILPFDPAVGSDPEFARYVAGVSQAMQQKRQAQHGRRPGNPRGNWPPMDDAHRTWPFPEFFTEGDGLHGGWSGAQGDSASSSDETSSANGDSLFSMFSGPDLVAAVKQRRKHSSGEQDTSTLPSPPLLTTVEDVNQDNKTKTWPPKAPWQHPSPLPSTLPSPSAPLYAVTSPGSQWNDTMQMLQSPVWAATNDCSAAAFSYVQTPPQPPPPPAHKAAPKGFKAFPGKGERRPAYLPQY</sequence>
<dbReference type="EMBL" id="AB002353">
    <property type="protein sequence ID" value="BAA20812.2"/>
    <property type="status" value="ALT_INIT"/>
    <property type="molecule type" value="mRNA"/>
</dbReference>
<dbReference type="EMBL" id="BC104761">
    <property type="protein sequence ID" value="AAI04762.1"/>
    <property type="molecule type" value="mRNA"/>
</dbReference>
<dbReference type="EMBL" id="BC104763">
    <property type="protein sequence ID" value="AAI04764.1"/>
    <property type="molecule type" value="mRNA"/>
</dbReference>
<dbReference type="CCDS" id="CCDS12436.1"/>
<dbReference type="RefSeq" id="NP_055501.2">
    <property type="nucleotide sequence ID" value="NM_014686.3"/>
</dbReference>
<dbReference type="RefSeq" id="XP_005259501.1">
    <property type="nucleotide sequence ID" value="XM_005259444.1"/>
</dbReference>
<dbReference type="PDB" id="8BUX">
    <property type="method" value="X-ray"/>
    <property type="resolution" value="1.86 A"/>
    <property type="chains" value="A=225-553"/>
</dbReference>
<dbReference type="PDB" id="8BUY">
    <property type="method" value="X-ray"/>
    <property type="resolution" value="1.60 A"/>
    <property type="chains" value="A/B=70-208"/>
</dbReference>
<dbReference type="PDBsum" id="8BUX"/>
<dbReference type="PDBsum" id="8BUY"/>
<dbReference type="SMR" id="O15063"/>
<dbReference type="BioGRID" id="115061">
    <property type="interactions" value="171"/>
</dbReference>
<dbReference type="FunCoup" id="O15063">
    <property type="interactions" value="985"/>
</dbReference>
<dbReference type="IntAct" id="O15063">
    <property type="interactions" value="27"/>
</dbReference>
<dbReference type="MINT" id="O15063"/>
<dbReference type="STRING" id="9606.ENSP00000299505"/>
<dbReference type="GlyGen" id="O15063">
    <property type="glycosylation" value="2 sites, 1 N-linked glycan (1 site), 1 O-linked glycan (1 site)"/>
</dbReference>
<dbReference type="iPTMnet" id="O15063"/>
<dbReference type="PhosphoSitePlus" id="O15063"/>
<dbReference type="BioMuta" id="KIAA0355"/>
<dbReference type="jPOST" id="O15063"/>
<dbReference type="MassIVE" id="O15063"/>
<dbReference type="PaxDb" id="9606-ENSP00000299505"/>
<dbReference type="PeptideAtlas" id="O15063"/>
<dbReference type="ProteomicsDB" id="48415"/>
<dbReference type="Pumba" id="O15063"/>
<dbReference type="Antibodypedia" id="2909">
    <property type="antibodies" value="23 antibodies from 12 providers"/>
</dbReference>
<dbReference type="DNASU" id="9710"/>
<dbReference type="Ensembl" id="ENST00000299505.8">
    <property type="protein sequence ID" value="ENSP00000299505.4"/>
    <property type="gene ID" value="ENSG00000166398.14"/>
</dbReference>
<dbReference type="GeneID" id="9710"/>
<dbReference type="KEGG" id="hsa:9710"/>
<dbReference type="MANE-Select" id="ENST00000299505.8">
    <property type="protein sequence ID" value="ENSP00000299505.4"/>
    <property type="RefSeq nucleotide sequence ID" value="NM_014686.5"/>
    <property type="RefSeq protein sequence ID" value="NP_055501.2"/>
</dbReference>
<dbReference type="UCSC" id="uc002nvd.5">
    <property type="organism name" value="human"/>
</dbReference>
<dbReference type="AGR" id="HGNC:29016"/>
<dbReference type="CTD" id="9710"/>
<dbReference type="DisGeNET" id="9710"/>
<dbReference type="GeneCards" id="GARRE1"/>
<dbReference type="HGNC" id="HGNC:29016">
    <property type="gene designation" value="GARRE1"/>
</dbReference>
<dbReference type="HPA" id="ENSG00000166398">
    <property type="expression patterns" value="Low tissue specificity"/>
</dbReference>
<dbReference type="MIM" id="619335">
    <property type="type" value="gene"/>
</dbReference>
<dbReference type="neXtProt" id="NX_O15063"/>
<dbReference type="OpenTargets" id="ENSG00000166398"/>
<dbReference type="VEuPathDB" id="HostDB:ENSG00000166398"/>
<dbReference type="eggNOG" id="ENOG502QR1K">
    <property type="taxonomic scope" value="Eukaryota"/>
</dbReference>
<dbReference type="GeneTree" id="ENSGT00390000003210"/>
<dbReference type="HOGENOM" id="CLU_010313_0_0_1"/>
<dbReference type="InParanoid" id="O15063"/>
<dbReference type="OMA" id="LAQWPGI"/>
<dbReference type="OrthoDB" id="8928145at2759"/>
<dbReference type="PAN-GO" id="O15063">
    <property type="GO annotations" value="2 GO annotations based on evolutionary models"/>
</dbReference>
<dbReference type="PhylomeDB" id="O15063"/>
<dbReference type="TreeFam" id="TF328377"/>
<dbReference type="PathwayCommons" id="O15063"/>
<dbReference type="Reactome" id="R-HSA-9013149">
    <property type="pathway name" value="RAC1 GTPase cycle"/>
</dbReference>
<dbReference type="Reactome" id="R-HSA-9013404">
    <property type="pathway name" value="RAC2 GTPase cycle"/>
</dbReference>
<dbReference type="Reactome" id="R-HSA-9013408">
    <property type="pathway name" value="RHOG GTPase cycle"/>
</dbReference>
<dbReference type="Reactome" id="R-HSA-9013423">
    <property type="pathway name" value="RAC3 GTPase cycle"/>
</dbReference>
<dbReference type="SignaLink" id="O15063"/>
<dbReference type="BioGRID-ORCS" id="9710">
    <property type="hits" value="14 hits in 1153 CRISPR screens"/>
</dbReference>
<dbReference type="CD-CODE" id="232F8A39">
    <property type="entry name" value="P-body"/>
</dbReference>
<dbReference type="CD-CODE" id="DEE660B4">
    <property type="entry name" value="Stress granule"/>
</dbReference>
<dbReference type="ChiTaRS" id="KIAA0355">
    <property type="organism name" value="human"/>
</dbReference>
<dbReference type="GenomeRNAi" id="9710"/>
<dbReference type="Pharos" id="O15063">
    <property type="development level" value="Tdark"/>
</dbReference>
<dbReference type="PRO" id="PR:O15063"/>
<dbReference type="Proteomes" id="UP000005640">
    <property type="component" value="Chromosome 19"/>
</dbReference>
<dbReference type="RNAct" id="O15063">
    <property type="molecule type" value="protein"/>
</dbReference>
<dbReference type="Bgee" id="ENSG00000166398">
    <property type="expression patterns" value="Expressed in placenta and 105 other cell types or tissues"/>
</dbReference>
<dbReference type="ExpressionAtlas" id="O15063">
    <property type="expression patterns" value="baseline and differential"/>
</dbReference>
<dbReference type="GO" id="GO:0005829">
    <property type="term" value="C:cytosol"/>
    <property type="evidence" value="ECO:0000304"/>
    <property type="project" value="Reactome"/>
</dbReference>
<dbReference type="GO" id="GO:0000932">
    <property type="term" value="C:P-body"/>
    <property type="evidence" value="ECO:0000314"/>
    <property type="project" value="UniProtKB"/>
</dbReference>
<dbReference type="GO" id="GO:1905762">
    <property type="term" value="F:CCR4-NOT complex binding"/>
    <property type="evidence" value="ECO:0000314"/>
    <property type="project" value="UniProtKB"/>
</dbReference>
<dbReference type="GO" id="GO:0031267">
    <property type="term" value="F:small GTPase binding"/>
    <property type="evidence" value="ECO:0000353"/>
    <property type="project" value="UniProtKB"/>
</dbReference>
<dbReference type="GO" id="GO:0016601">
    <property type="term" value="P:Rac protein signal transduction"/>
    <property type="evidence" value="ECO:0000314"/>
    <property type="project" value="UniProtKB"/>
</dbReference>
<dbReference type="InterPro" id="IPR031813">
    <property type="entry name" value="DUF4745"/>
</dbReference>
<dbReference type="InterPro" id="IPR043385">
    <property type="entry name" value="GARRE1"/>
</dbReference>
<dbReference type="PANTHER" id="PTHR15703:SF3">
    <property type="entry name" value="GRANULE ASSOCIATED RAC AND RHOG EFFECTOR PROTEIN 1"/>
    <property type="match status" value="1"/>
</dbReference>
<dbReference type="PANTHER" id="PTHR15703">
    <property type="entry name" value="RIKEN CDNA 4931406P16 GENE"/>
    <property type="match status" value="1"/>
</dbReference>
<dbReference type="Pfam" id="PF15923">
    <property type="entry name" value="DUF4745"/>
    <property type="match status" value="1"/>
</dbReference>
<accession>O15063</accession>
<accession>Q2M3W4</accession>
<evidence type="ECO:0000256" key="1">
    <source>
        <dbReference type="SAM" id="MobiDB-lite"/>
    </source>
</evidence>
<evidence type="ECO:0000269" key="2">
    <source>
    </source>
</evidence>
<evidence type="ECO:0000269" key="3">
    <source>
    </source>
</evidence>
<evidence type="ECO:0000305" key="4"/>
<evidence type="ECO:0000305" key="5">
    <source>
    </source>
</evidence>
<evidence type="ECO:0000312" key="6">
    <source>
        <dbReference type="HGNC" id="HGNC:29016"/>
    </source>
</evidence>
<evidence type="ECO:0007744" key="7">
    <source>
    </source>
</evidence>
<evidence type="ECO:0007829" key="8">
    <source>
        <dbReference type="PDB" id="8BUX"/>
    </source>
</evidence>
<gene>
    <name evidence="6" type="primary">GARRE1</name>
    <name type="synonym">KIAA0355</name>
</gene>
<proteinExistence type="evidence at protein level"/>